<feature type="chain" id="PRO_0000186499" description="Fructose-like PTS system EIIBC component">
    <location>
        <begin position="1"/>
        <end position="483"/>
    </location>
</feature>
<feature type="transmembrane region" description="Helical" evidence="3">
    <location>
        <begin position="132"/>
        <end position="152"/>
    </location>
</feature>
<feature type="transmembrane region" description="Helical" evidence="3">
    <location>
        <begin position="180"/>
        <end position="200"/>
    </location>
</feature>
<feature type="transmembrane region" description="Helical" evidence="3">
    <location>
        <begin position="204"/>
        <end position="224"/>
    </location>
</feature>
<feature type="transmembrane region" description="Helical" evidence="3">
    <location>
        <begin position="227"/>
        <end position="247"/>
    </location>
</feature>
<feature type="transmembrane region" description="Helical" evidence="3">
    <location>
        <begin position="264"/>
        <end position="284"/>
    </location>
</feature>
<feature type="transmembrane region" description="Helical" evidence="3">
    <location>
        <begin position="303"/>
        <end position="323"/>
    </location>
</feature>
<feature type="transmembrane region" description="Helical" evidence="3">
    <location>
        <begin position="344"/>
        <end position="364"/>
    </location>
</feature>
<feature type="transmembrane region" description="Helical" evidence="3">
    <location>
        <begin position="380"/>
        <end position="400"/>
    </location>
</feature>
<feature type="transmembrane region" description="Helical" evidence="3">
    <location>
        <begin position="402"/>
        <end position="422"/>
    </location>
</feature>
<feature type="transmembrane region" description="Helical" evidence="3">
    <location>
        <begin position="442"/>
        <end position="462"/>
    </location>
</feature>
<feature type="domain" description="PTS EIIB type-2" evidence="2">
    <location>
        <begin position="1"/>
        <end position="105"/>
    </location>
</feature>
<feature type="domain" description="PTS EIIC type-2" evidence="3">
    <location>
        <begin position="128"/>
        <end position="475"/>
    </location>
</feature>
<feature type="active site" description="Phosphocysteine intermediate; for EIIB activity" evidence="1 5">
    <location>
        <position position="13"/>
    </location>
</feature>
<feature type="modified residue" description="Phosphocysteine; by EIIA" evidence="2">
    <location>
        <position position="13"/>
    </location>
</feature>
<accession>P32154</accession>
<accession>Q2M8J6</accession>
<comment type="function">
    <text evidence="7">The phosphoenolpyruvate-dependent sugar phosphotransferase system (sugar PTS), a major carbohydrate active transport system, catalyzes the phosphorylation of incoming sugar substrates concomitantly with their translocation across the cell membrane. The enzyme II FrvAB PTS system is involved in fructose transport.</text>
</comment>
<comment type="catalytic activity">
    <reaction evidence="1">
        <text>D-fructose(out) + N(pros)-phospho-L-histidyl-[protein] = D-fructose 1-phosphate(in) + L-histidyl-[protein]</text>
        <dbReference type="Rhea" id="RHEA:49252"/>
        <dbReference type="Rhea" id="RHEA-COMP:9745"/>
        <dbReference type="Rhea" id="RHEA-COMP:9746"/>
        <dbReference type="ChEBI" id="CHEBI:29979"/>
        <dbReference type="ChEBI" id="CHEBI:37721"/>
        <dbReference type="ChEBI" id="CHEBI:58674"/>
        <dbReference type="ChEBI" id="CHEBI:64837"/>
        <dbReference type="EC" id="2.7.1.202"/>
    </reaction>
</comment>
<comment type="subcellular location">
    <subcellularLocation>
        <location evidence="3 6">Cell inner membrane</location>
        <topology evidence="3">Multi-pass membrane protein</topology>
    </subcellularLocation>
</comment>
<comment type="domain">
    <text evidence="2">The PTS EIIB type-2 domain is phosphorylated by phospho-EIIA on a cysteinyl residue. Then, it transfers the phosphoryl group to the sugar substrate concomitantly with the sugar uptake processed by the PTS EIIC type-2 domain.</text>
</comment>
<comment type="domain">
    <text evidence="3">The EIIC type-2 domain forms the PTS system translocation channel and contains the specific substrate-binding site.</text>
</comment>
<comment type="sequence caution" evidence="5">
    <conflict type="erroneous initiation">
        <sequence resource="EMBL-CDS" id="AAB03032"/>
    </conflict>
    <text>Extended N-terminus.</text>
</comment>
<proteinExistence type="inferred from homology"/>
<reference key="1">
    <citation type="journal article" date="1993" name="Nucleic Acids Res.">
        <title>Analysis of the Escherichia coli genome. III. DNA sequence of the region from 87.2 to 89.2 minutes.</title>
        <authorList>
            <person name="Plunkett G. III"/>
            <person name="Burland V."/>
            <person name="Daniels D.L."/>
            <person name="Blattner F.R."/>
        </authorList>
    </citation>
    <scope>NUCLEOTIDE SEQUENCE [LARGE SCALE GENOMIC DNA]</scope>
    <source>
        <strain>K12 / MG1655 / ATCC 47076</strain>
    </source>
</reference>
<reference key="2">
    <citation type="journal article" date="1997" name="Science">
        <title>The complete genome sequence of Escherichia coli K-12.</title>
        <authorList>
            <person name="Blattner F.R."/>
            <person name="Plunkett G. III"/>
            <person name="Bloch C.A."/>
            <person name="Perna N.T."/>
            <person name="Burland V."/>
            <person name="Riley M."/>
            <person name="Collado-Vides J."/>
            <person name="Glasner J.D."/>
            <person name="Rode C.K."/>
            <person name="Mayhew G.F."/>
            <person name="Gregor J."/>
            <person name="Davis N.W."/>
            <person name="Kirkpatrick H.A."/>
            <person name="Goeden M.A."/>
            <person name="Rose D.J."/>
            <person name="Mau B."/>
            <person name="Shao Y."/>
        </authorList>
    </citation>
    <scope>NUCLEOTIDE SEQUENCE [LARGE SCALE GENOMIC DNA]</scope>
    <source>
        <strain>K12 / MG1655 / ATCC 47076</strain>
    </source>
</reference>
<reference key="3">
    <citation type="journal article" date="2006" name="Mol. Syst. Biol.">
        <title>Highly accurate genome sequences of Escherichia coli K-12 strains MG1655 and W3110.</title>
        <authorList>
            <person name="Hayashi K."/>
            <person name="Morooka N."/>
            <person name="Yamamoto Y."/>
            <person name="Fujita K."/>
            <person name="Isono K."/>
            <person name="Choi S."/>
            <person name="Ohtsubo E."/>
            <person name="Baba T."/>
            <person name="Wanner B.L."/>
            <person name="Mori H."/>
            <person name="Horiuchi T."/>
        </authorList>
    </citation>
    <scope>NUCLEOTIDE SEQUENCE [LARGE SCALE GENOMIC DNA]</scope>
    <source>
        <strain>K12 / W3110 / ATCC 27325 / DSM 5911</strain>
    </source>
</reference>
<reference key="4">
    <citation type="journal article" date="1994" name="Protein Sci.">
        <title>Novel phosphotransferase system genes revealed by bacterial genome analysis: unique, putative fructose- and glucoside-specific systems.</title>
        <authorList>
            <person name="Reizer J."/>
            <person name="Michotey V."/>
            <person name="Reizer A."/>
            <person name="Saier M.H. Jr."/>
        </authorList>
    </citation>
    <scope>FUNCTION</scope>
    <scope>DISCUSSION OF SEQUENCE</scope>
</reference>
<reference key="5">
    <citation type="journal article" date="2005" name="Science">
        <title>Global topology analysis of the Escherichia coli inner membrane proteome.</title>
        <authorList>
            <person name="Daley D.O."/>
            <person name="Rapp M."/>
            <person name="Granseth E."/>
            <person name="Melen K."/>
            <person name="Drew D."/>
            <person name="von Heijne G."/>
        </authorList>
    </citation>
    <scope>SUBCELLULAR LOCATION</scope>
    <source>
        <strain>K12 / MG1655 / ATCC 47076</strain>
    </source>
</reference>
<name>PTFLB_ECOLI</name>
<dbReference type="EC" id="2.7.1.202" evidence="1"/>
<dbReference type="EMBL" id="L19201">
    <property type="protein sequence ID" value="AAB03032.1"/>
    <property type="status" value="ALT_INIT"/>
    <property type="molecule type" value="Genomic_DNA"/>
</dbReference>
<dbReference type="EMBL" id="U00096">
    <property type="protein sequence ID" value="AAC76881.2"/>
    <property type="molecule type" value="Genomic_DNA"/>
</dbReference>
<dbReference type="EMBL" id="AP009048">
    <property type="protein sequence ID" value="BAE77410.1"/>
    <property type="molecule type" value="Genomic_DNA"/>
</dbReference>
<dbReference type="RefSeq" id="NP_418335.4">
    <property type="nucleotide sequence ID" value="NC_000913.3"/>
</dbReference>
<dbReference type="RefSeq" id="WP_000446023.1">
    <property type="nucleotide sequence ID" value="NZ_LN832404.1"/>
</dbReference>
<dbReference type="SMR" id="P32154"/>
<dbReference type="BioGRID" id="4259396">
    <property type="interactions" value="17"/>
</dbReference>
<dbReference type="ComplexPortal" id="CPX-5979">
    <property type="entry name" value="Frv fructose-like enzyme II complex"/>
</dbReference>
<dbReference type="FunCoup" id="P32154">
    <property type="interactions" value="83"/>
</dbReference>
<dbReference type="STRING" id="511145.b3899"/>
<dbReference type="TCDB" id="4.A.2.1.25">
    <property type="family name" value="the pts fructose-mannitol (fru) family"/>
</dbReference>
<dbReference type="PaxDb" id="511145-b3899"/>
<dbReference type="EnsemblBacteria" id="AAC76881">
    <property type="protein sequence ID" value="AAC76881"/>
    <property type="gene ID" value="b3899"/>
</dbReference>
<dbReference type="GeneID" id="948390"/>
<dbReference type="KEGG" id="ecj:JW5562"/>
<dbReference type="KEGG" id="eco:b3899"/>
<dbReference type="KEGG" id="ecoc:C3026_21080"/>
<dbReference type="PATRIC" id="fig|1411691.4.peg.2808"/>
<dbReference type="EchoBASE" id="EB1809"/>
<dbReference type="eggNOG" id="COG1299">
    <property type="taxonomic scope" value="Bacteria"/>
</dbReference>
<dbReference type="eggNOG" id="COG1445">
    <property type="taxonomic scope" value="Bacteria"/>
</dbReference>
<dbReference type="HOGENOM" id="CLU_013155_0_0_6"/>
<dbReference type="InParanoid" id="P32154"/>
<dbReference type="OMA" id="ISTWIRP"/>
<dbReference type="OrthoDB" id="9782569at2"/>
<dbReference type="PhylomeDB" id="P32154"/>
<dbReference type="BioCyc" id="EcoCyc:FRVB-MONOMER"/>
<dbReference type="BioCyc" id="MetaCyc:FRVB-MONOMER"/>
<dbReference type="PRO" id="PR:P32154"/>
<dbReference type="Proteomes" id="UP000000625">
    <property type="component" value="Chromosome"/>
</dbReference>
<dbReference type="GO" id="GO:0005886">
    <property type="term" value="C:plasma membrane"/>
    <property type="evidence" value="ECO:0000314"/>
    <property type="project" value="EcoCyc"/>
</dbReference>
<dbReference type="GO" id="GO:1902495">
    <property type="term" value="C:transmembrane transporter complex"/>
    <property type="evidence" value="ECO:0000303"/>
    <property type="project" value="ComplexPortal"/>
</dbReference>
<dbReference type="GO" id="GO:0005351">
    <property type="term" value="F:carbohydrate:proton symporter activity"/>
    <property type="evidence" value="ECO:0007669"/>
    <property type="project" value="InterPro"/>
</dbReference>
<dbReference type="GO" id="GO:0016301">
    <property type="term" value="F:kinase activity"/>
    <property type="evidence" value="ECO:0007669"/>
    <property type="project" value="UniProtKB-KW"/>
</dbReference>
<dbReference type="GO" id="GO:0022877">
    <property type="term" value="F:protein-N(PI)-phosphohistidine-fructose phosphotransferase system transporter activity"/>
    <property type="evidence" value="ECO:0007669"/>
    <property type="project" value="InterPro"/>
</dbReference>
<dbReference type="GO" id="GO:0090563">
    <property type="term" value="F:protein-phosphocysteine-sugar phosphotransferase activity"/>
    <property type="evidence" value="ECO:0000318"/>
    <property type="project" value="GO_Central"/>
</dbReference>
<dbReference type="GO" id="GO:1990539">
    <property type="term" value="P:fructose import across plasma membrane"/>
    <property type="evidence" value="ECO:0000303"/>
    <property type="project" value="ComplexPortal"/>
</dbReference>
<dbReference type="GO" id="GO:0009401">
    <property type="term" value="P:phosphoenolpyruvate-dependent sugar phosphotransferase system"/>
    <property type="evidence" value="ECO:0000247"/>
    <property type="project" value="EcoCyc"/>
</dbReference>
<dbReference type="CDD" id="cd05569">
    <property type="entry name" value="PTS_IIB_fructose"/>
    <property type="match status" value="1"/>
</dbReference>
<dbReference type="FunFam" id="3.40.50.2300:FF:000014">
    <property type="entry name" value="PTS system fructose-like transporter subunit IIB"/>
    <property type="match status" value="1"/>
</dbReference>
<dbReference type="Gene3D" id="3.40.50.2300">
    <property type="match status" value="1"/>
</dbReference>
<dbReference type="InterPro" id="IPR050864">
    <property type="entry name" value="Bacterial_PTS_Sugar_Transport"/>
</dbReference>
<dbReference type="InterPro" id="IPR036095">
    <property type="entry name" value="PTS_EIIB-like_sf"/>
</dbReference>
<dbReference type="InterPro" id="IPR013011">
    <property type="entry name" value="PTS_EIIB_2"/>
</dbReference>
<dbReference type="InterPro" id="IPR003501">
    <property type="entry name" value="PTS_EIIB_2/3"/>
</dbReference>
<dbReference type="InterPro" id="IPR003352">
    <property type="entry name" value="PTS_EIIC"/>
</dbReference>
<dbReference type="InterPro" id="IPR013014">
    <property type="entry name" value="PTS_EIIC_2"/>
</dbReference>
<dbReference type="InterPro" id="IPR003353">
    <property type="entry name" value="PTS_IIB_fruc"/>
</dbReference>
<dbReference type="InterPro" id="IPR006327">
    <property type="entry name" value="PTS_IIC_fruc"/>
</dbReference>
<dbReference type="NCBIfam" id="TIGR00829">
    <property type="entry name" value="FRU"/>
    <property type="match status" value="1"/>
</dbReference>
<dbReference type="NCBIfam" id="NF008493">
    <property type="entry name" value="PRK11404.1"/>
    <property type="match status" value="1"/>
</dbReference>
<dbReference type="NCBIfam" id="TIGR01427">
    <property type="entry name" value="PTS_IIC_fructo"/>
    <property type="match status" value="1"/>
</dbReference>
<dbReference type="PANTHER" id="PTHR30505">
    <property type="entry name" value="FRUCTOSE-LIKE PERMEASE"/>
    <property type="match status" value="1"/>
</dbReference>
<dbReference type="PANTHER" id="PTHR30505:SF0">
    <property type="entry name" value="FRUCTOSE-LIKE PTS SYSTEM EIIBC COMPONENT-RELATED"/>
    <property type="match status" value="1"/>
</dbReference>
<dbReference type="Pfam" id="PF02378">
    <property type="entry name" value="PTS_EIIC"/>
    <property type="match status" value="1"/>
</dbReference>
<dbReference type="Pfam" id="PF02302">
    <property type="entry name" value="PTS_IIB"/>
    <property type="match status" value="1"/>
</dbReference>
<dbReference type="SUPFAM" id="SSF52794">
    <property type="entry name" value="PTS system IIB component-like"/>
    <property type="match status" value="1"/>
</dbReference>
<dbReference type="PROSITE" id="PS51099">
    <property type="entry name" value="PTS_EIIB_TYPE_2"/>
    <property type="match status" value="1"/>
</dbReference>
<dbReference type="PROSITE" id="PS51104">
    <property type="entry name" value="PTS_EIIC_TYPE_2"/>
    <property type="match status" value="1"/>
</dbReference>
<protein>
    <recommendedName>
        <fullName evidence="7">Fructose-like PTS system EIIBC component</fullName>
    </recommendedName>
    <domain>
        <recommendedName>
            <fullName evidence="7">PTS system fructose-like EIIB component</fullName>
            <ecNumber evidence="1">2.7.1.202</ecNumber>
        </recommendedName>
        <alternativeName>
            <fullName evidence="7">Fructose-like phosphotransferase enzyme IIB component</fullName>
        </alternativeName>
    </domain>
    <domain>
        <recommendedName>
            <fullName evidence="7">PTS system fructose-like EIIC component</fullName>
        </recommendedName>
        <alternativeName>
            <fullName evidence="7">Fructose-like permease IIC component</fullName>
        </alternativeName>
    </domain>
</protein>
<keyword id="KW-0997">Cell inner membrane</keyword>
<keyword id="KW-1003">Cell membrane</keyword>
<keyword id="KW-0418">Kinase</keyword>
<keyword id="KW-0472">Membrane</keyword>
<keyword id="KW-0597">Phosphoprotein</keyword>
<keyword id="KW-0598">Phosphotransferase system</keyword>
<keyword id="KW-1185">Reference proteome</keyword>
<keyword id="KW-0762">Sugar transport</keyword>
<keyword id="KW-0808">Transferase</keyword>
<keyword id="KW-0812">Transmembrane</keyword>
<keyword id="KW-1133">Transmembrane helix</keyword>
<keyword id="KW-0813">Transport</keyword>
<gene>
    <name evidence="4" type="primary">frvB</name>
    <name type="synonym">yiiJ</name>
    <name type="ordered locus">b3899</name>
    <name type="ordered locus">JW5562</name>
</gene>
<organism>
    <name type="scientific">Escherichia coli (strain K12)</name>
    <dbReference type="NCBI Taxonomy" id="83333"/>
    <lineage>
        <taxon>Bacteria</taxon>
        <taxon>Pseudomonadati</taxon>
        <taxon>Pseudomonadota</taxon>
        <taxon>Gammaproteobacteria</taxon>
        <taxon>Enterobacterales</taxon>
        <taxon>Enterobacteriaceae</taxon>
        <taxon>Escherichia</taxon>
    </lineage>
</organism>
<evidence type="ECO:0000250" key="1">
    <source>
        <dbReference type="UniProtKB" id="P20966"/>
    </source>
</evidence>
<evidence type="ECO:0000255" key="2">
    <source>
        <dbReference type="PROSITE-ProRule" id="PRU00422"/>
    </source>
</evidence>
<evidence type="ECO:0000255" key="3">
    <source>
        <dbReference type="PROSITE-ProRule" id="PRU00427"/>
    </source>
</evidence>
<evidence type="ECO:0000303" key="4">
    <source>
    </source>
</evidence>
<evidence type="ECO:0000305" key="5"/>
<evidence type="ECO:0000305" key="6">
    <source>
    </source>
</evidence>
<evidence type="ECO:0000305" key="7">
    <source>
    </source>
</evidence>
<sequence>MESSLRIVAITNCPAGIAHTYMVAEALEQKARSLGHTIKVETQGSSGVENRLSSEEIAAADYVILATGRGLSGDDRARFAGKKVYEIAISQALKNIDQIFSELPTNSQLFAADSGVKLGKQEVQSGSVMSHLMAGVSAALPFVIGGGILVALANMLVQFGLPYTDMSKGAPSFTWVVESIGYLGFTFMIPIMGAYIASSIADKPAFAPAFLVCYLANDKALLGTQSGAGFLGAVVLGLAIGYFVFWFRKVRLGKALQPLLGSMLIPFVTLLVFGVLTYYVIGPVMSDLMGGLLHFLNTIPPSMKFAAAFLVGAMLAFDMGGPINKTAWFFCFSLLEKHIYDWYAIVGVVALMPPVAAGLATFIAPKLFTRQEKEAASSAIVVGATVATEPAIPYALAAPLPMITANTLAGGITGVLVIAFGIKRLAPGLGIFDPLIGLMSPVGSFYLVLAIGLALNISFIIVLKGLWLRRKAKAAQQELVHEH</sequence>